<feature type="chain" id="PRO_0000025296" description="Subtilisin inhibitor 1">
    <location>
        <begin position="1"/>
        <end position="92"/>
    </location>
</feature>
<feature type="chain" id="PRO_0000025297" description="Subtilisin inhibitor 2">
    <location>
        <begin position="20"/>
        <end position="92"/>
    </location>
</feature>
<feature type="region of interest" description="Disordered" evidence="1">
    <location>
        <begin position="1"/>
        <end position="31"/>
    </location>
</feature>
<feature type="compositionally biased region" description="Polar residues" evidence="1">
    <location>
        <begin position="1"/>
        <end position="12"/>
    </location>
</feature>
<feature type="site" description="Reactive bond">
    <location>
        <begin position="68"/>
        <end position="69"/>
    </location>
</feature>
<name>ICI1_PHAAN</name>
<keyword id="KW-0903">Direct protein sequencing</keyword>
<keyword id="KW-0646">Protease inhibitor</keyword>
<keyword id="KW-0722">Serine protease inhibitor</keyword>
<evidence type="ECO:0000256" key="1">
    <source>
        <dbReference type="SAM" id="MobiDB-lite"/>
    </source>
</evidence>
<evidence type="ECO:0000305" key="2"/>
<sequence length="92" mass="10384">QEQGTNPSQEQNVPLPRNYKQALETNTPTKTSWPELVGVTAEQAETKIKEEMVDVQIQVSPHDSFVTADYNPKRVRLYVDESNKVTRTPSIG</sequence>
<protein>
    <recommendedName>
        <fullName>Subtilisin inhibitor 1</fullName>
    </recommendedName>
    <alternativeName>
        <fullName>ASI-I</fullName>
    </alternativeName>
    <alternativeName>
        <fullName>Subtilisin inhibitor I</fullName>
    </alternativeName>
    <component>
        <recommendedName>
            <fullName>Subtilisin inhibitor 2</fullName>
        </recommendedName>
        <alternativeName>
            <fullName>ASI-II</fullName>
        </alternativeName>
        <alternativeName>
            <fullName>Subtilisin inhibitor II</fullName>
        </alternativeName>
    </component>
</protein>
<organism>
    <name type="scientific">Phaseolus angularis</name>
    <name type="common">Azuki bean</name>
    <name type="synonym">Vigna angularis</name>
    <dbReference type="NCBI Taxonomy" id="3914"/>
    <lineage>
        <taxon>Eukaryota</taxon>
        <taxon>Viridiplantae</taxon>
        <taxon>Streptophyta</taxon>
        <taxon>Embryophyta</taxon>
        <taxon>Tracheophyta</taxon>
        <taxon>Spermatophyta</taxon>
        <taxon>Magnoliopsida</taxon>
        <taxon>eudicotyledons</taxon>
        <taxon>Gunneridae</taxon>
        <taxon>Pentapetalae</taxon>
        <taxon>rosids</taxon>
        <taxon>fabids</taxon>
        <taxon>Fabales</taxon>
        <taxon>Fabaceae</taxon>
        <taxon>Papilionoideae</taxon>
        <taxon>50 kb inversion clade</taxon>
        <taxon>NPAAA clade</taxon>
        <taxon>indigoferoid/millettioid clade</taxon>
        <taxon>Phaseoleae</taxon>
        <taxon>Vigna</taxon>
    </lineage>
</organism>
<accession>P16064</accession>
<proteinExistence type="evidence at protein level"/>
<comment type="function">
    <text>Inhibitor of subtilisin.</text>
</comment>
<comment type="similarity">
    <text evidence="2">Belongs to the protease inhibitor I13 (potato type I serine protease inhibitor) family.</text>
</comment>
<reference key="1">
    <citation type="journal article" date="1989" name="J. Biochem.">
        <title>The complete amino acid sequence of a subtilisin inhibitor from adzuki beans (Vigna angularis).</title>
        <authorList>
            <person name="Nozawa H."/>
            <person name="Yamagata H."/>
            <person name="Aizono Y."/>
            <person name="Yoshikawa M."/>
            <person name="Iwasaki T."/>
        </authorList>
    </citation>
    <scope>PROTEIN SEQUENCE</scope>
</reference>
<dbReference type="PIR" id="JX0089">
    <property type="entry name" value="JX0089"/>
</dbReference>
<dbReference type="SMR" id="P16064"/>
<dbReference type="MEROPS" id="I13.007"/>
<dbReference type="GO" id="GO:0004867">
    <property type="term" value="F:serine-type endopeptidase inhibitor activity"/>
    <property type="evidence" value="ECO:0007669"/>
    <property type="project" value="UniProtKB-KW"/>
</dbReference>
<dbReference type="GO" id="GO:0009611">
    <property type="term" value="P:response to wounding"/>
    <property type="evidence" value="ECO:0007669"/>
    <property type="project" value="InterPro"/>
</dbReference>
<dbReference type="Gene3D" id="3.30.10.10">
    <property type="entry name" value="Trypsin Inhibitor V, subunit A"/>
    <property type="match status" value="1"/>
</dbReference>
<dbReference type="InterPro" id="IPR000864">
    <property type="entry name" value="Prot_inh_pot1"/>
</dbReference>
<dbReference type="InterPro" id="IPR036354">
    <property type="entry name" value="Prot_inh_pot1_sf"/>
</dbReference>
<dbReference type="PANTHER" id="PTHR33091">
    <property type="entry name" value="PROTEIN, PUTATIVE, EXPRESSED-RELATED"/>
    <property type="match status" value="1"/>
</dbReference>
<dbReference type="PANTHER" id="PTHR33091:SF29">
    <property type="entry name" value="SUBTILISIN INHIBITOR 1"/>
    <property type="match status" value="1"/>
</dbReference>
<dbReference type="Pfam" id="PF00280">
    <property type="entry name" value="potato_inhibit"/>
    <property type="match status" value="1"/>
</dbReference>
<dbReference type="PRINTS" id="PR00292">
    <property type="entry name" value="POTATOINHBTR"/>
</dbReference>
<dbReference type="SUPFAM" id="SSF54654">
    <property type="entry name" value="CI-2 family of serine protease inhibitors"/>
    <property type="match status" value="1"/>
</dbReference>
<dbReference type="PROSITE" id="PS00285">
    <property type="entry name" value="POTATO_INHIBITOR"/>
    <property type="match status" value="1"/>
</dbReference>